<accession>O82199</accession>
<evidence type="ECO:0000255" key="1">
    <source>
        <dbReference type="PROSITE-ProRule" id="PRU00723"/>
    </source>
</evidence>
<evidence type="ECO:0000256" key="2">
    <source>
        <dbReference type="SAM" id="MobiDB-lite"/>
    </source>
</evidence>
<dbReference type="EMBL" id="AC005169">
    <property type="protein sequence ID" value="AAC62135.1"/>
    <property type="molecule type" value="Genomic_DNA"/>
</dbReference>
<dbReference type="EMBL" id="CP002685">
    <property type="protein sequence ID" value="AEC06929.1"/>
    <property type="molecule type" value="Genomic_DNA"/>
</dbReference>
<dbReference type="EMBL" id="AY136395">
    <property type="protein sequence ID" value="AAM97061.1"/>
    <property type="molecule type" value="mRNA"/>
</dbReference>
<dbReference type="EMBL" id="BT002114">
    <property type="protein sequence ID" value="AAN72125.1"/>
    <property type="molecule type" value="mRNA"/>
</dbReference>
<dbReference type="EMBL" id="AY084253">
    <property type="protein sequence ID" value="AAM60847.1"/>
    <property type="molecule type" value="mRNA"/>
</dbReference>
<dbReference type="PIR" id="D84581">
    <property type="entry name" value="D84581"/>
</dbReference>
<dbReference type="RefSeq" id="NP_179571.1">
    <property type="nucleotide sequence ID" value="NM_127539.3"/>
</dbReference>
<dbReference type="BioGRID" id="1855">
    <property type="interactions" value="1"/>
</dbReference>
<dbReference type="FunCoup" id="O82199">
    <property type="interactions" value="206"/>
</dbReference>
<dbReference type="STRING" id="3702.O82199"/>
<dbReference type="iPTMnet" id="O82199"/>
<dbReference type="PaxDb" id="3702-AT2G19810.1"/>
<dbReference type="ProteomicsDB" id="240382"/>
<dbReference type="EnsemblPlants" id="AT2G19810.1">
    <property type="protein sequence ID" value="AT2G19810.1"/>
    <property type="gene ID" value="AT2G19810"/>
</dbReference>
<dbReference type="GeneID" id="816500"/>
<dbReference type="Gramene" id="AT2G19810.1">
    <property type="protein sequence ID" value="AT2G19810.1"/>
    <property type="gene ID" value="AT2G19810"/>
</dbReference>
<dbReference type="KEGG" id="ath:AT2G19810"/>
<dbReference type="Araport" id="AT2G19810"/>
<dbReference type="TAIR" id="AT2G19810">
    <property type="gene designation" value="OZF1"/>
</dbReference>
<dbReference type="eggNOG" id="KOG1595">
    <property type="taxonomic scope" value="Eukaryota"/>
</dbReference>
<dbReference type="HOGENOM" id="CLU_044407_0_0_1"/>
<dbReference type="InParanoid" id="O82199"/>
<dbReference type="OMA" id="KWCEEDE"/>
<dbReference type="OrthoDB" id="410307at2759"/>
<dbReference type="PhylomeDB" id="O82199"/>
<dbReference type="PRO" id="PR:O82199"/>
<dbReference type="Proteomes" id="UP000006548">
    <property type="component" value="Chromosome 2"/>
</dbReference>
<dbReference type="ExpressionAtlas" id="O82199">
    <property type="expression patterns" value="baseline and differential"/>
</dbReference>
<dbReference type="GO" id="GO:0005886">
    <property type="term" value="C:plasma membrane"/>
    <property type="evidence" value="ECO:0000314"/>
    <property type="project" value="TAIR"/>
</dbReference>
<dbReference type="GO" id="GO:0003677">
    <property type="term" value="F:DNA binding"/>
    <property type="evidence" value="ECO:0007669"/>
    <property type="project" value="UniProtKB-KW"/>
</dbReference>
<dbReference type="GO" id="GO:0003700">
    <property type="term" value="F:DNA-binding transcription factor activity"/>
    <property type="evidence" value="ECO:0000250"/>
    <property type="project" value="TAIR"/>
</dbReference>
<dbReference type="GO" id="GO:0008270">
    <property type="term" value="F:zinc ion binding"/>
    <property type="evidence" value="ECO:0007669"/>
    <property type="project" value="UniProtKB-KW"/>
</dbReference>
<dbReference type="GO" id="GO:0051607">
    <property type="term" value="P:defense response to virus"/>
    <property type="evidence" value="ECO:0000270"/>
    <property type="project" value="TAIR"/>
</dbReference>
<dbReference type="GO" id="GO:0006355">
    <property type="term" value="P:regulation of DNA-templated transcription"/>
    <property type="evidence" value="ECO:0000304"/>
    <property type="project" value="TAIR"/>
</dbReference>
<dbReference type="GO" id="GO:0006979">
    <property type="term" value="P:response to oxidative stress"/>
    <property type="evidence" value="ECO:0000315"/>
    <property type="project" value="TAIR"/>
</dbReference>
<dbReference type="FunFam" id="3.30.1370.210:FF:000009">
    <property type="entry name" value="Zinc finger CCCH domain-containing protein 66"/>
    <property type="match status" value="1"/>
</dbReference>
<dbReference type="Gene3D" id="3.30.1370.210">
    <property type="match status" value="1"/>
</dbReference>
<dbReference type="InterPro" id="IPR045234">
    <property type="entry name" value="Unkempt-like"/>
</dbReference>
<dbReference type="InterPro" id="IPR000571">
    <property type="entry name" value="Znf_CCCH"/>
</dbReference>
<dbReference type="PANTHER" id="PTHR14493">
    <property type="entry name" value="UNKEMPT FAMILY MEMBER"/>
    <property type="match status" value="1"/>
</dbReference>
<dbReference type="PANTHER" id="PTHR14493:SF155">
    <property type="entry name" value="ZINC FINGER CCCH DOMAIN-CONTAINING PROTEIN 20"/>
    <property type="match status" value="1"/>
</dbReference>
<dbReference type="Pfam" id="PF25512">
    <property type="entry name" value="zf-CCCH_AtC3H23"/>
    <property type="match status" value="1"/>
</dbReference>
<dbReference type="SMART" id="SM00356">
    <property type="entry name" value="ZnF_C3H1"/>
    <property type="match status" value="2"/>
</dbReference>
<dbReference type="PROSITE" id="PS50103">
    <property type="entry name" value="ZF_C3H1"/>
    <property type="match status" value="3"/>
</dbReference>
<reference key="1">
    <citation type="journal article" date="1999" name="Nature">
        <title>Sequence and analysis of chromosome 2 of the plant Arabidopsis thaliana.</title>
        <authorList>
            <person name="Lin X."/>
            <person name="Kaul S."/>
            <person name="Rounsley S.D."/>
            <person name="Shea T.P."/>
            <person name="Benito M.-I."/>
            <person name="Town C.D."/>
            <person name="Fujii C.Y."/>
            <person name="Mason T.M."/>
            <person name="Bowman C.L."/>
            <person name="Barnstead M.E."/>
            <person name="Feldblyum T.V."/>
            <person name="Buell C.R."/>
            <person name="Ketchum K.A."/>
            <person name="Lee J.J."/>
            <person name="Ronning C.M."/>
            <person name="Koo H.L."/>
            <person name="Moffat K.S."/>
            <person name="Cronin L.A."/>
            <person name="Shen M."/>
            <person name="Pai G."/>
            <person name="Van Aken S."/>
            <person name="Umayam L."/>
            <person name="Tallon L.J."/>
            <person name="Gill J.E."/>
            <person name="Adams M.D."/>
            <person name="Carrera A.J."/>
            <person name="Creasy T.H."/>
            <person name="Goodman H.M."/>
            <person name="Somerville C.R."/>
            <person name="Copenhaver G.P."/>
            <person name="Preuss D."/>
            <person name="Nierman W.C."/>
            <person name="White O."/>
            <person name="Eisen J.A."/>
            <person name="Salzberg S.L."/>
            <person name="Fraser C.M."/>
            <person name="Venter J.C."/>
        </authorList>
    </citation>
    <scope>NUCLEOTIDE SEQUENCE [LARGE SCALE GENOMIC DNA]</scope>
    <source>
        <strain>cv. Columbia</strain>
    </source>
</reference>
<reference key="2">
    <citation type="journal article" date="2017" name="Plant J.">
        <title>Araport11: a complete reannotation of the Arabidopsis thaliana reference genome.</title>
        <authorList>
            <person name="Cheng C.Y."/>
            <person name="Krishnakumar V."/>
            <person name="Chan A.P."/>
            <person name="Thibaud-Nissen F."/>
            <person name="Schobel S."/>
            <person name="Town C.D."/>
        </authorList>
    </citation>
    <scope>GENOME REANNOTATION</scope>
    <source>
        <strain>cv. Columbia</strain>
    </source>
</reference>
<reference key="3">
    <citation type="journal article" date="2003" name="Science">
        <title>Empirical analysis of transcriptional activity in the Arabidopsis genome.</title>
        <authorList>
            <person name="Yamada K."/>
            <person name="Lim J."/>
            <person name="Dale J.M."/>
            <person name="Chen H."/>
            <person name="Shinn P."/>
            <person name="Palm C.J."/>
            <person name="Southwick A.M."/>
            <person name="Wu H.C."/>
            <person name="Kim C.J."/>
            <person name="Nguyen M."/>
            <person name="Pham P.K."/>
            <person name="Cheuk R.F."/>
            <person name="Karlin-Newmann G."/>
            <person name="Liu S.X."/>
            <person name="Lam B."/>
            <person name="Sakano H."/>
            <person name="Wu T."/>
            <person name="Yu G."/>
            <person name="Miranda M."/>
            <person name="Quach H.L."/>
            <person name="Tripp M."/>
            <person name="Chang C.H."/>
            <person name="Lee J.M."/>
            <person name="Toriumi M.J."/>
            <person name="Chan M.M."/>
            <person name="Tang C.C."/>
            <person name="Onodera C.S."/>
            <person name="Deng J.M."/>
            <person name="Akiyama K."/>
            <person name="Ansari Y."/>
            <person name="Arakawa T."/>
            <person name="Banh J."/>
            <person name="Banno F."/>
            <person name="Bowser L."/>
            <person name="Brooks S.Y."/>
            <person name="Carninci P."/>
            <person name="Chao Q."/>
            <person name="Choy N."/>
            <person name="Enju A."/>
            <person name="Goldsmith A.D."/>
            <person name="Gurjal M."/>
            <person name="Hansen N.F."/>
            <person name="Hayashizaki Y."/>
            <person name="Johnson-Hopson C."/>
            <person name="Hsuan V.W."/>
            <person name="Iida K."/>
            <person name="Karnes M."/>
            <person name="Khan S."/>
            <person name="Koesema E."/>
            <person name="Ishida J."/>
            <person name="Jiang P.X."/>
            <person name="Jones T."/>
            <person name="Kawai J."/>
            <person name="Kamiya A."/>
            <person name="Meyers C."/>
            <person name="Nakajima M."/>
            <person name="Narusaka M."/>
            <person name="Seki M."/>
            <person name="Sakurai T."/>
            <person name="Satou M."/>
            <person name="Tamse R."/>
            <person name="Vaysberg M."/>
            <person name="Wallender E.K."/>
            <person name="Wong C."/>
            <person name="Yamamura Y."/>
            <person name="Yuan S."/>
            <person name="Shinozaki K."/>
            <person name="Davis R.W."/>
            <person name="Theologis A."/>
            <person name="Ecker J.R."/>
        </authorList>
    </citation>
    <scope>NUCLEOTIDE SEQUENCE [LARGE SCALE MRNA]</scope>
    <source>
        <strain>cv. Columbia</strain>
    </source>
</reference>
<reference key="4">
    <citation type="submission" date="2002-03" db="EMBL/GenBank/DDBJ databases">
        <title>Full-length cDNA from Arabidopsis thaliana.</title>
        <authorList>
            <person name="Brover V.V."/>
            <person name="Troukhan M.E."/>
            <person name="Alexandrov N.A."/>
            <person name="Lu Y.-P."/>
            <person name="Flavell R.B."/>
            <person name="Feldmann K.A."/>
        </authorList>
    </citation>
    <scope>NUCLEOTIDE SEQUENCE [LARGE SCALE MRNA]</scope>
</reference>
<reference key="5">
    <citation type="journal article" date="2008" name="BMC Genomics">
        <title>Genome-wide analysis of CCCH zinc finger family in Arabidopsis and rice.</title>
        <authorList>
            <person name="Wang D."/>
            <person name="Guo Y."/>
            <person name="Wu C."/>
            <person name="Yang G."/>
            <person name="Li Y."/>
            <person name="Zheng C."/>
        </authorList>
    </citation>
    <scope>NOMENCLATURE</scope>
</reference>
<feature type="chain" id="PRO_0000371979" description="Zinc finger CCCH domain-containing protein 20">
    <location>
        <begin position="1"/>
        <end position="359"/>
    </location>
</feature>
<feature type="zinc finger region" description="C3H1-type 1" evidence="1">
    <location>
        <begin position="75"/>
        <end position="107"/>
    </location>
</feature>
<feature type="zinc finger region" description="C3H1-type 2" evidence="1">
    <location>
        <begin position="119"/>
        <end position="145"/>
    </location>
</feature>
<feature type="zinc finger region" description="C3H1-type 3" evidence="1">
    <location>
        <begin position="153"/>
        <end position="177"/>
    </location>
</feature>
<feature type="region of interest" description="Disordered" evidence="2">
    <location>
        <begin position="207"/>
        <end position="226"/>
    </location>
</feature>
<feature type="region of interest" description="Disordered" evidence="2">
    <location>
        <begin position="334"/>
        <end position="359"/>
    </location>
</feature>
<protein>
    <recommendedName>
        <fullName>Zinc finger CCCH domain-containing protein 20</fullName>
        <shortName>AtC3H20</shortName>
    </recommendedName>
</protein>
<keyword id="KW-0238">DNA-binding</keyword>
<keyword id="KW-0479">Metal-binding</keyword>
<keyword id="KW-1185">Reference proteome</keyword>
<keyword id="KW-0677">Repeat</keyword>
<keyword id="KW-0862">Zinc</keyword>
<keyword id="KW-0863">Zinc-finger</keyword>
<name>C3H20_ARATH</name>
<gene>
    <name type="ordered locus">At2g19810</name>
    <name type="ORF">F6F22.16</name>
</gene>
<sequence>MMIGESHRGFNPTVHIPPWPLSEDLTVSDIYGSPDGGSSMMEALAELQRYLPSNEPDPDSDPDLSGPDSPIDAYTCDHFRMYEFKVRRCARGRSHDWTECPYAHPGEKARRRDPRKFHYSGTACPEFRKGCCKRGDACEFSHGVFECWLHPARYRTQPCKDGGNCRRRVCFFAHSPDQIRVLPNQSPDRVDSFDVLSPTIRRAFQFSISPSSNSPPVSPRGDSDSSCSLLSRSLGSNLGNDVVASLRNLQLNKVKSSLSSSYNNQIGGYGSGFGSPRGSVLGPGFRSLPTTPTRPGFMNIWENGLEEEPAMERVESGRELRAQLFEKLSKENCMGRIEPDPDQGAGDTPDVGWVSDLVM</sequence>
<organism>
    <name type="scientific">Arabidopsis thaliana</name>
    <name type="common">Mouse-ear cress</name>
    <dbReference type="NCBI Taxonomy" id="3702"/>
    <lineage>
        <taxon>Eukaryota</taxon>
        <taxon>Viridiplantae</taxon>
        <taxon>Streptophyta</taxon>
        <taxon>Embryophyta</taxon>
        <taxon>Tracheophyta</taxon>
        <taxon>Spermatophyta</taxon>
        <taxon>Magnoliopsida</taxon>
        <taxon>eudicotyledons</taxon>
        <taxon>Gunneridae</taxon>
        <taxon>Pentapetalae</taxon>
        <taxon>rosids</taxon>
        <taxon>malvids</taxon>
        <taxon>Brassicales</taxon>
        <taxon>Brassicaceae</taxon>
        <taxon>Camelineae</taxon>
        <taxon>Arabidopsis</taxon>
    </lineage>
</organism>
<proteinExistence type="evidence at transcript level"/>